<feature type="chain" id="PRO_0000363137" description="UPF0725 protein At1g19060">
    <location>
        <begin position="1"/>
        <end position="287"/>
    </location>
</feature>
<gene>
    <name type="ordered locus">At1g19060</name>
    <name type="ORF">F14D16.21</name>
</gene>
<proteinExistence type="inferred from homology"/>
<dbReference type="EMBL" id="AC068602">
    <property type="protein sequence ID" value="AAF79299.1"/>
    <property type="molecule type" value="Genomic_DNA"/>
</dbReference>
<dbReference type="EMBL" id="CP002684">
    <property type="protein sequence ID" value="AEE29796.1"/>
    <property type="molecule type" value="Genomic_DNA"/>
</dbReference>
<dbReference type="PIR" id="B86324">
    <property type="entry name" value="B86324"/>
</dbReference>
<dbReference type="RefSeq" id="NP_173340.1">
    <property type="nucleotide sequence ID" value="NM_101764.1"/>
</dbReference>
<dbReference type="SMR" id="Q9LMC2"/>
<dbReference type="STRING" id="3702.Q9LMC2"/>
<dbReference type="PaxDb" id="3702-AT1G19060.1"/>
<dbReference type="ProteomicsDB" id="242463"/>
<dbReference type="EnsemblPlants" id="AT1G19060.1">
    <property type="protein sequence ID" value="AT1G19060.1"/>
    <property type="gene ID" value="AT1G19060"/>
</dbReference>
<dbReference type="GeneID" id="838488"/>
<dbReference type="Gramene" id="AT1G19060.1">
    <property type="protein sequence ID" value="AT1G19060.1"/>
    <property type="gene ID" value="AT1G19060"/>
</dbReference>
<dbReference type="KEGG" id="ath:AT1G19060"/>
<dbReference type="Araport" id="AT1G19060"/>
<dbReference type="TAIR" id="AT1G19060"/>
<dbReference type="HOGENOM" id="CLU_053767_0_1_1"/>
<dbReference type="InParanoid" id="Q9LMC2"/>
<dbReference type="OMA" id="WINLYLE"/>
<dbReference type="PhylomeDB" id="Q9LMC2"/>
<dbReference type="PRO" id="PR:Q9LMC2"/>
<dbReference type="Proteomes" id="UP000006548">
    <property type="component" value="Chromosome 1"/>
</dbReference>
<dbReference type="ExpressionAtlas" id="Q9LMC2">
    <property type="expression patterns" value="baseline and differential"/>
</dbReference>
<dbReference type="InterPro" id="IPR006462">
    <property type="entry name" value="MS5"/>
</dbReference>
<dbReference type="NCBIfam" id="TIGR01572">
    <property type="entry name" value="A_thl_para_3677"/>
    <property type="match status" value="1"/>
</dbReference>
<dbReference type="PANTHER" id="PTHR31260">
    <property type="entry name" value="CYSTATIN/MONELLIN SUPERFAMILY PROTEIN"/>
    <property type="match status" value="1"/>
</dbReference>
<dbReference type="PANTHER" id="PTHR31260:SF35">
    <property type="entry name" value="MALECTIN-LIKE DOMAIN-CONTAINING PROTEIN"/>
    <property type="match status" value="1"/>
</dbReference>
<dbReference type="Pfam" id="PF04776">
    <property type="entry name" value="protein_MS5"/>
    <property type="match status" value="1"/>
</dbReference>
<organism>
    <name type="scientific">Arabidopsis thaliana</name>
    <name type="common">Mouse-ear cress</name>
    <dbReference type="NCBI Taxonomy" id="3702"/>
    <lineage>
        <taxon>Eukaryota</taxon>
        <taxon>Viridiplantae</taxon>
        <taxon>Streptophyta</taxon>
        <taxon>Embryophyta</taxon>
        <taxon>Tracheophyta</taxon>
        <taxon>Spermatophyta</taxon>
        <taxon>Magnoliopsida</taxon>
        <taxon>eudicotyledons</taxon>
        <taxon>Gunneridae</taxon>
        <taxon>Pentapetalae</taxon>
        <taxon>rosids</taxon>
        <taxon>malvids</taxon>
        <taxon>Brassicales</taxon>
        <taxon>Brassicaceae</taxon>
        <taxon>Camelineae</taxon>
        <taxon>Arabidopsis</taxon>
    </lineage>
</organism>
<keyword id="KW-1185">Reference proteome</keyword>
<sequence>MDWTMISGSRDESLHAARDYWRRLNESECFDIEGIEAPPGAIALIPYDCQLPNSFHPLPLWVKLYASAGLHRFNMLEVLVNERSVGKLNIIVPIARPKGVTTNERFIPCDCFSVDDKLPQWPSHDSFNDRKRFYSVKESELQNNDWINLYLELVLCAIQKVRISDSDLSKLKIVKAVIETKEDMVPPNERLNAKTAVVYITFKGLANARIAAGEHYERKAIIRRIFNEHTGHLSLLGDLIGEKKFVNIDPVTYFNSPAYLEDITHELPPESPWMDILAGTGSMDQID</sequence>
<protein>
    <recommendedName>
        <fullName>UPF0725 protein At1g19060</fullName>
    </recommendedName>
</protein>
<reference key="1">
    <citation type="journal article" date="2000" name="Nature">
        <title>Sequence and analysis of chromosome 1 of the plant Arabidopsis thaliana.</title>
        <authorList>
            <person name="Theologis A."/>
            <person name="Ecker J.R."/>
            <person name="Palm C.J."/>
            <person name="Federspiel N.A."/>
            <person name="Kaul S."/>
            <person name="White O."/>
            <person name="Alonso J."/>
            <person name="Altafi H."/>
            <person name="Araujo R."/>
            <person name="Bowman C.L."/>
            <person name="Brooks S.Y."/>
            <person name="Buehler E."/>
            <person name="Chan A."/>
            <person name="Chao Q."/>
            <person name="Chen H."/>
            <person name="Cheuk R.F."/>
            <person name="Chin C.W."/>
            <person name="Chung M.K."/>
            <person name="Conn L."/>
            <person name="Conway A.B."/>
            <person name="Conway A.R."/>
            <person name="Creasy T.H."/>
            <person name="Dewar K."/>
            <person name="Dunn P."/>
            <person name="Etgu P."/>
            <person name="Feldblyum T.V."/>
            <person name="Feng J.-D."/>
            <person name="Fong B."/>
            <person name="Fujii C.Y."/>
            <person name="Gill J.E."/>
            <person name="Goldsmith A.D."/>
            <person name="Haas B."/>
            <person name="Hansen N.F."/>
            <person name="Hughes B."/>
            <person name="Huizar L."/>
            <person name="Hunter J.L."/>
            <person name="Jenkins J."/>
            <person name="Johnson-Hopson C."/>
            <person name="Khan S."/>
            <person name="Khaykin E."/>
            <person name="Kim C.J."/>
            <person name="Koo H.L."/>
            <person name="Kremenetskaia I."/>
            <person name="Kurtz D.B."/>
            <person name="Kwan A."/>
            <person name="Lam B."/>
            <person name="Langin-Hooper S."/>
            <person name="Lee A."/>
            <person name="Lee J.M."/>
            <person name="Lenz C.A."/>
            <person name="Li J.H."/>
            <person name="Li Y.-P."/>
            <person name="Lin X."/>
            <person name="Liu S.X."/>
            <person name="Liu Z.A."/>
            <person name="Luros J.S."/>
            <person name="Maiti R."/>
            <person name="Marziali A."/>
            <person name="Militscher J."/>
            <person name="Miranda M."/>
            <person name="Nguyen M."/>
            <person name="Nierman W.C."/>
            <person name="Osborne B.I."/>
            <person name="Pai G."/>
            <person name="Peterson J."/>
            <person name="Pham P.K."/>
            <person name="Rizzo M."/>
            <person name="Rooney T."/>
            <person name="Rowley D."/>
            <person name="Sakano H."/>
            <person name="Salzberg S.L."/>
            <person name="Schwartz J.R."/>
            <person name="Shinn P."/>
            <person name="Southwick A.M."/>
            <person name="Sun H."/>
            <person name="Tallon L.J."/>
            <person name="Tambunga G."/>
            <person name="Toriumi M.J."/>
            <person name="Town C.D."/>
            <person name="Utterback T."/>
            <person name="Van Aken S."/>
            <person name="Vaysberg M."/>
            <person name="Vysotskaia V.S."/>
            <person name="Walker M."/>
            <person name="Wu D."/>
            <person name="Yu G."/>
            <person name="Fraser C.M."/>
            <person name="Venter J.C."/>
            <person name="Davis R.W."/>
        </authorList>
    </citation>
    <scope>NUCLEOTIDE SEQUENCE [LARGE SCALE GENOMIC DNA]</scope>
    <source>
        <strain>cv. Columbia</strain>
    </source>
</reference>
<reference key="2">
    <citation type="journal article" date="2017" name="Plant J.">
        <title>Araport11: a complete reannotation of the Arabidopsis thaliana reference genome.</title>
        <authorList>
            <person name="Cheng C.Y."/>
            <person name="Krishnakumar V."/>
            <person name="Chan A.P."/>
            <person name="Thibaud-Nissen F."/>
            <person name="Schobel S."/>
            <person name="Town C.D."/>
        </authorList>
    </citation>
    <scope>GENOME REANNOTATION</scope>
    <source>
        <strain>cv. Columbia</strain>
    </source>
</reference>
<comment type="similarity">
    <text evidence="1">Belongs to the UPF0725 (EMB2204) family.</text>
</comment>
<accession>Q9LMC2</accession>
<evidence type="ECO:0000305" key="1"/>
<name>Y1196_ARATH</name>